<reference key="1">
    <citation type="submission" date="2007-06" db="EMBL/GenBank/DDBJ databases">
        <title>Complete sequence of chromosome of Staphylococcus aureus subsp. aureus JH1.</title>
        <authorList>
            <consortium name="US DOE Joint Genome Institute"/>
            <person name="Copeland A."/>
            <person name="Lucas S."/>
            <person name="Lapidus A."/>
            <person name="Barry K."/>
            <person name="Detter J.C."/>
            <person name="Glavina del Rio T."/>
            <person name="Hammon N."/>
            <person name="Israni S."/>
            <person name="Dalin E."/>
            <person name="Tice H."/>
            <person name="Pitluck S."/>
            <person name="Chain P."/>
            <person name="Malfatti S."/>
            <person name="Shin M."/>
            <person name="Vergez L."/>
            <person name="Schmutz J."/>
            <person name="Larimer F."/>
            <person name="Land M."/>
            <person name="Hauser L."/>
            <person name="Kyrpides N."/>
            <person name="Ivanova N."/>
            <person name="Tomasz A."/>
            <person name="Richardson P."/>
        </authorList>
    </citation>
    <scope>NUCLEOTIDE SEQUENCE [LARGE SCALE GENOMIC DNA]</scope>
    <source>
        <strain>JH1</strain>
    </source>
</reference>
<proteinExistence type="inferred from homology"/>
<dbReference type="EC" id="2.7.1.-"/>
<dbReference type="EMBL" id="CP000736">
    <property type="protein sequence ID" value="ABR51622.1"/>
    <property type="molecule type" value="Genomic_DNA"/>
</dbReference>
<dbReference type="SMR" id="A6TZK4"/>
<dbReference type="KEGG" id="sah:SaurJH1_0766"/>
<dbReference type="HOGENOM" id="CLU_045532_1_0_9"/>
<dbReference type="GO" id="GO:0005886">
    <property type="term" value="C:plasma membrane"/>
    <property type="evidence" value="ECO:0007669"/>
    <property type="project" value="TreeGrafter"/>
</dbReference>
<dbReference type="GO" id="GO:0005524">
    <property type="term" value="F:ATP binding"/>
    <property type="evidence" value="ECO:0007669"/>
    <property type="project" value="UniProtKB-KW"/>
</dbReference>
<dbReference type="GO" id="GO:0004143">
    <property type="term" value="F:ATP-dependent diacylglycerol kinase activity"/>
    <property type="evidence" value="ECO:0007669"/>
    <property type="project" value="TreeGrafter"/>
</dbReference>
<dbReference type="GO" id="GO:0046872">
    <property type="term" value="F:metal ion binding"/>
    <property type="evidence" value="ECO:0007669"/>
    <property type="project" value="UniProtKB-KW"/>
</dbReference>
<dbReference type="GO" id="GO:0008654">
    <property type="term" value="P:phospholipid biosynthetic process"/>
    <property type="evidence" value="ECO:0007669"/>
    <property type="project" value="UniProtKB-KW"/>
</dbReference>
<dbReference type="Gene3D" id="2.60.200.40">
    <property type="match status" value="1"/>
</dbReference>
<dbReference type="Gene3D" id="3.40.50.10330">
    <property type="entry name" value="Probable inorganic polyphosphate/atp-NAD kinase, domain 1"/>
    <property type="match status" value="1"/>
</dbReference>
<dbReference type="InterPro" id="IPR017438">
    <property type="entry name" value="ATP-NAD_kinase_N"/>
</dbReference>
<dbReference type="InterPro" id="IPR005218">
    <property type="entry name" value="Diacylglycerol/lipid_kinase"/>
</dbReference>
<dbReference type="InterPro" id="IPR001206">
    <property type="entry name" value="Diacylglycerol_kinase_cat_dom"/>
</dbReference>
<dbReference type="InterPro" id="IPR050187">
    <property type="entry name" value="Lipid_Phosphate_FormReg"/>
</dbReference>
<dbReference type="InterPro" id="IPR016064">
    <property type="entry name" value="NAD/diacylglycerol_kinase_sf"/>
</dbReference>
<dbReference type="InterPro" id="IPR045540">
    <property type="entry name" value="YegS/DAGK_C"/>
</dbReference>
<dbReference type="NCBIfam" id="TIGR00147">
    <property type="entry name" value="YegS/Rv2252/BmrU family lipid kinase"/>
    <property type="match status" value="1"/>
</dbReference>
<dbReference type="PANTHER" id="PTHR12358:SF106">
    <property type="entry name" value="LIPID KINASE YEGS"/>
    <property type="match status" value="1"/>
</dbReference>
<dbReference type="PANTHER" id="PTHR12358">
    <property type="entry name" value="SPHINGOSINE KINASE"/>
    <property type="match status" value="1"/>
</dbReference>
<dbReference type="Pfam" id="PF00781">
    <property type="entry name" value="DAGK_cat"/>
    <property type="match status" value="1"/>
</dbReference>
<dbReference type="Pfam" id="PF19279">
    <property type="entry name" value="YegS_C"/>
    <property type="match status" value="1"/>
</dbReference>
<dbReference type="SMART" id="SM00046">
    <property type="entry name" value="DAGKc"/>
    <property type="match status" value="1"/>
</dbReference>
<dbReference type="SUPFAM" id="SSF111331">
    <property type="entry name" value="NAD kinase/diacylglycerol kinase-like"/>
    <property type="match status" value="1"/>
</dbReference>
<dbReference type="PROSITE" id="PS50146">
    <property type="entry name" value="DAGK"/>
    <property type="match status" value="1"/>
</dbReference>
<gene>
    <name type="ordered locus">SaurJH1_0766</name>
</gene>
<comment type="function">
    <text evidence="1">May catalyze the ATP-dependent phosphorylation of lipids other than diacylglycerol (DAG).</text>
</comment>
<comment type="cofactor">
    <cofactor evidence="1">
        <name>Mg(2+)</name>
        <dbReference type="ChEBI" id="CHEBI:18420"/>
    </cofactor>
    <text evidence="1">Binds 1 Mg(2+) ion per subunit. This ion appears to have a structural role and is required for catalytic activity.</text>
</comment>
<comment type="similarity">
    <text evidence="3">Belongs to the diacylglycerol/lipid kinase family.</text>
</comment>
<organism>
    <name type="scientific">Staphylococcus aureus (strain JH1)</name>
    <dbReference type="NCBI Taxonomy" id="359787"/>
    <lineage>
        <taxon>Bacteria</taxon>
        <taxon>Bacillati</taxon>
        <taxon>Bacillota</taxon>
        <taxon>Bacilli</taxon>
        <taxon>Bacillales</taxon>
        <taxon>Staphylococcaceae</taxon>
        <taxon>Staphylococcus</taxon>
    </lineage>
</organism>
<accession>A6TZK4</accession>
<keyword id="KW-0067">ATP-binding</keyword>
<keyword id="KW-0418">Kinase</keyword>
<keyword id="KW-0444">Lipid biosynthesis</keyword>
<keyword id="KW-0443">Lipid metabolism</keyword>
<keyword id="KW-0460">Magnesium</keyword>
<keyword id="KW-0479">Metal-binding</keyword>
<keyword id="KW-0547">Nucleotide-binding</keyword>
<keyword id="KW-0594">Phospholipid biosynthesis</keyword>
<keyword id="KW-1208">Phospholipid metabolism</keyword>
<keyword id="KW-0808">Transferase</keyword>
<sequence length="305" mass="33612">MENKYTHGVLFYHEHSGLKNINQGIGEVTTALSSICKHLSIQLSENEGDIIKYCQEIKTKNYAKDVDILFILGGDGTVNELINGVMSHDLQLPIGILPGGTFNDFTKTLNIAPNHKQASEQMISAQVGTYDVIKINNQYALNFVGLGLIVQNAENVQDGSKDIFGKLSYIGSTVKTLLNPTQFNYQLSIDDKTYSGETTMILTANGPFIGGSRIPLTDLSPQDGELNTFIFNEQSFSILNDIFKKRDSMNWNEITQGIEHIPGKKISLTTDPAMKVDIDGEISLETPIDIEVIPNAIQLLTVNDL</sequence>
<evidence type="ECO:0000250" key="1"/>
<evidence type="ECO:0000255" key="2">
    <source>
        <dbReference type="PROSITE-ProRule" id="PRU00783"/>
    </source>
</evidence>
<evidence type="ECO:0000305" key="3"/>
<feature type="chain" id="PRO_0000386506" description="Putative lipid kinase SaurJH1_0766">
    <location>
        <begin position="1"/>
        <end position="305"/>
    </location>
</feature>
<feature type="domain" description="DAGKc" evidence="2">
    <location>
        <begin position="3"/>
        <end position="139"/>
    </location>
</feature>
<feature type="active site" description="Proton acceptor" evidence="1">
    <location>
        <position position="281"/>
    </location>
</feature>
<feature type="binding site" evidence="2">
    <location>
        <position position="44"/>
    </location>
    <ligand>
        <name>ATP</name>
        <dbReference type="ChEBI" id="CHEBI:30616"/>
    </ligand>
</feature>
<feature type="binding site" evidence="2">
    <location>
        <begin position="74"/>
        <end position="80"/>
    </location>
    <ligand>
        <name>ATP</name>
        <dbReference type="ChEBI" id="CHEBI:30616"/>
    </ligand>
</feature>
<feature type="binding site" evidence="2">
    <location>
        <position position="101"/>
    </location>
    <ligand>
        <name>ATP</name>
        <dbReference type="ChEBI" id="CHEBI:30616"/>
    </ligand>
</feature>
<feature type="binding site" evidence="1">
    <location>
        <position position="220"/>
    </location>
    <ligand>
        <name>Mg(2+)</name>
        <dbReference type="ChEBI" id="CHEBI:18420"/>
    </ligand>
</feature>
<feature type="binding site" evidence="1">
    <location>
        <position position="223"/>
    </location>
    <ligand>
        <name>Mg(2+)</name>
        <dbReference type="ChEBI" id="CHEBI:18420"/>
    </ligand>
</feature>
<feature type="binding site" evidence="1">
    <location>
        <position position="225"/>
    </location>
    <ligand>
        <name>Mg(2+)</name>
        <dbReference type="ChEBI" id="CHEBI:18420"/>
    </ligand>
</feature>
<name>Y766_STAA2</name>
<protein>
    <recommendedName>
        <fullName>Putative lipid kinase SaurJH1_0766</fullName>
        <ecNumber>2.7.1.-</ecNumber>
    </recommendedName>
</protein>